<keyword id="KW-0010">Activator</keyword>
<keyword id="KW-0073">Auxin biosynthesis</keyword>
<keyword id="KW-0927">Auxin signaling pathway</keyword>
<keyword id="KW-0217">Developmental protein</keyword>
<keyword id="KW-0238">DNA-binding</keyword>
<keyword id="KW-0479">Metal-binding</keyword>
<keyword id="KW-0539">Nucleus</keyword>
<keyword id="KW-1185">Reference proteome</keyword>
<keyword id="KW-0862">Zinc</keyword>
<comment type="function">
    <text evidence="2">Transcription activator that binds DNA on 5'-ACTCTAC-3' and promotes auxin homeostasis-regulating gene expression (e.g. YUC genes), as well as genes affecting stamen development, cell expansion and timing of flowering. Synergistically with other SHI-related proteins, regulates gynoecium, stamen and leaf development in a dose-dependent manner, controlling apical-basal patterning. Promotes style and stigma formation, and influences vascular development during gynoecium development. May also have a role in the formation and/or maintenance of the shoot apical meristem (SAM).</text>
</comment>
<comment type="subcellular location">
    <subcellularLocation>
        <location evidence="1">Nucleus</location>
    </subcellularLocation>
</comment>
<comment type="disruption phenotype">
    <text evidence="2">No visible phenotype.</text>
</comment>
<comment type="similarity">
    <text evidence="3">Belongs to the SHI protein family.</text>
</comment>
<feature type="chain" id="PRO_0000424575" description="Protein SHI RELATED SEQUENCE 3">
    <location>
        <begin position="1"/>
        <end position="174"/>
    </location>
</feature>
<feature type="DNA-binding region" description="Zn(2)-C6 fungal-type; degenerate" evidence="1">
    <location>
        <begin position="9"/>
        <end position="36"/>
    </location>
</feature>
<feature type="short sequence motif" description="Required for homo- and heterodimerization" evidence="1">
    <location>
        <begin position="110"/>
        <end position="113"/>
    </location>
</feature>
<feature type="binding site" evidence="1">
    <location>
        <position position="9"/>
    </location>
    <ligand>
        <name>Zn(2+)</name>
        <dbReference type="ChEBI" id="CHEBI:29105"/>
        <label>1</label>
    </ligand>
</feature>
<feature type="binding site" evidence="1">
    <location>
        <position position="9"/>
    </location>
    <ligand>
        <name>Zn(2+)</name>
        <dbReference type="ChEBI" id="CHEBI:29105"/>
        <label>2</label>
    </ligand>
</feature>
<feature type="binding site" evidence="1">
    <location>
        <position position="12"/>
    </location>
    <ligand>
        <name>Zn(2+)</name>
        <dbReference type="ChEBI" id="CHEBI:29105"/>
        <label>1</label>
    </ligand>
</feature>
<feature type="binding site" evidence="1">
    <location>
        <position position="20"/>
    </location>
    <ligand>
        <name>Zn(2+)</name>
        <dbReference type="ChEBI" id="CHEBI:29105"/>
        <label>1</label>
    </ligand>
</feature>
<feature type="binding site" evidence="1">
    <location>
        <position position="25"/>
    </location>
    <ligand>
        <name>Zn(2+)</name>
        <dbReference type="ChEBI" id="CHEBI:29105"/>
        <label>1</label>
    </ligand>
</feature>
<feature type="binding site" evidence="1">
    <location>
        <position position="25"/>
    </location>
    <ligand>
        <name>Zn(2+)</name>
        <dbReference type="ChEBI" id="CHEBI:29105"/>
        <label>2</label>
    </ligand>
</feature>
<feature type="binding site" evidence="1">
    <location>
        <position position="29"/>
    </location>
    <ligand>
        <name>Zn(2+)</name>
        <dbReference type="ChEBI" id="CHEBI:29105"/>
        <label>2</label>
    </ligand>
</feature>
<feature type="binding site" evidence="1">
    <location>
        <position position="36"/>
    </location>
    <ligand>
        <name>Zn(2+)</name>
        <dbReference type="ChEBI" id="CHEBI:29105"/>
        <label>2</label>
    </ligand>
</feature>
<feature type="sequence conflict" description="In Ref. 3; AAN85201." evidence="3" ref="3">
    <original>K</original>
    <variation>E</variation>
    <location>
        <position position="41"/>
    </location>
</feature>
<protein>
    <recommendedName>
        <fullName>Protein SHI RELATED SEQUENCE 3</fullName>
    </recommendedName>
</protein>
<accession>Q9SJT8</accession>
<accession>Q8GUY8</accession>
<gene>
    <name type="primary">SRS3</name>
    <name type="ordered locus">At2g21400</name>
    <name type="ORF">F3K23.16</name>
</gene>
<sequence>MMMIMGRKCEDCGNQAKKDCVYMRCRTCCKSKAFHCQTHIKSTWVPAYRRSHHKHQSQPLSTSIPKGVQIHTTPGHFPAELSSLADFRCVKVSSIDDGKEQYAYQTTVNIGGHVFRGILHDQGLHKVMVDHHYNKNSNNHQELLTPSTSSCPLKITSPFTDFMFGTRFSSVLRR</sequence>
<proteinExistence type="evidence at transcript level"/>
<dbReference type="EMBL" id="AC006841">
    <property type="protein sequence ID" value="AAD23685.1"/>
    <property type="molecule type" value="Genomic_DNA"/>
</dbReference>
<dbReference type="EMBL" id="CP002685">
    <property type="protein sequence ID" value="AEC07174.1"/>
    <property type="molecule type" value="Genomic_DNA"/>
</dbReference>
<dbReference type="EMBL" id="AY163777">
    <property type="protein sequence ID" value="AAN85201.1"/>
    <property type="molecule type" value="mRNA"/>
</dbReference>
<dbReference type="PIR" id="G84600">
    <property type="entry name" value="G84600"/>
</dbReference>
<dbReference type="RefSeq" id="NP_179735.1">
    <property type="nucleotide sequence ID" value="NM_127712.3"/>
</dbReference>
<dbReference type="SMR" id="Q9SJT8"/>
<dbReference type="BioGRID" id="2032">
    <property type="interactions" value="7"/>
</dbReference>
<dbReference type="IntAct" id="Q9SJT8">
    <property type="interactions" value="7"/>
</dbReference>
<dbReference type="STRING" id="3702.Q9SJT8"/>
<dbReference type="PaxDb" id="3702-AT2G21400.1"/>
<dbReference type="EnsemblPlants" id="AT2G21400.1">
    <property type="protein sequence ID" value="AT2G21400.1"/>
    <property type="gene ID" value="AT2G21400"/>
</dbReference>
<dbReference type="GeneID" id="816679"/>
<dbReference type="Gramene" id="AT2G21400.1">
    <property type="protein sequence ID" value="AT2G21400.1"/>
    <property type="gene ID" value="AT2G21400"/>
</dbReference>
<dbReference type="KEGG" id="ath:AT2G21400"/>
<dbReference type="Araport" id="AT2G21400"/>
<dbReference type="TAIR" id="AT2G21400">
    <property type="gene designation" value="SRS3"/>
</dbReference>
<dbReference type="eggNOG" id="ENOG502QQ15">
    <property type="taxonomic scope" value="Eukaryota"/>
</dbReference>
<dbReference type="HOGENOM" id="CLU_041493_3_1_1"/>
<dbReference type="InParanoid" id="Q9SJT8"/>
<dbReference type="PhylomeDB" id="Q9SJT8"/>
<dbReference type="PRO" id="PR:Q9SJT8"/>
<dbReference type="Proteomes" id="UP000006548">
    <property type="component" value="Chromosome 2"/>
</dbReference>
<dbReference type="ExpressionAtlas" id="Q9SJT8">
    <property type="expression patterns" value="baseline and differential"/>
</dbReference>
<dbReference type="GO" id="GO:0005634">
    <property type="term" value="C:nucleus"/>
    <property type="evidence" value="ECO:0000250"/>
    <property type="project" value="UniProtKB"/>
</dbReference>
<dbReference type="GO" id="GO:0003677">
    <property type="term" value="F:DNA binding"/>
    <property type="evidence" value="ECO:0007669"/>
    <property type="project" value="UniProtKB-KW"/>
</dbReference>
<dbReference type="GO" id="GO:0003700">
    <property type="term" value="F:DNA-binding transcription factor activity"/>
    <property type="evidence" value="ECO:0007669"/>
    <property type="project" value="InterPro"/>
</dbReference>
<dbReference type="GO" id="GO:0046872">
    <property type="term" value="F:metal ion binding"/>
    <property type="evidence" value="ECO:0007669"/>
    <property type="project" value="UniProtKB-KW"/>
</dbReference>
<dbReference type="GO" id="GO:0009851">
    <property type="term" value="P:auxin biosynthetic process"/>
    <property type="evidence" value="ECO:0007669"/>
    <property type="project" value="UniProtKB-KW"/>
</dbReference>
<dbReference type="GO" id="GO:0009734">
    <property type="term" value="P:auxin-activated signaling pathway"/>
    <property type="evidence" value="ECO:0007669"/>
    <property type="project" value="UniProtKB-KW"/>
</dbReference>
<dbReference type="InterPro" id="IPR007818">
    <property type="entry name" value="SHI"/>
</dbReference>
<dbReference type="InterPro" id="IPR006511">
    <property type="entry name" value="SHI_C"/>
</dbReference>
<dbReference type="InterPro" id="IPR006510">
    <property type="entry name" value="Znf_LRP1"/>
</dbReference>
<dbReference type="NCBIfam" id="TIGR01624">
    <property type="entry name" value="LRP1_Cterm"/>
    <property type="match status" value="1"/>
</dbReference>
<dbReference type="NCBIfam" id="TIGR01623">
    <property type="entry name" value="put_zinc_LRP1"/>
    <property type="match status" value="1"/>
</dbReference>
<dbReference type="PANTHER" id="PTHR31604">
    <property type="entry name" value="PROTEIN LATERAL ROOT PRIMORDIUM 1"/>
    <property type="match status" value="1"/>
</dbReference>
<dbReference type="PANTHER" id="PTHR31604:SF16">
    <property type="entry name" value="PROTEIN SHI RELATED SEQUENCE 3"/>
    <property type="match status" value="1"/>
</dbReference>
<dbReference type="Pfam" id="PF05142">
    <property type="entry name" value="DUF702"/>
    <property type="match status" value="2"/>
</dbReference>
<organism>
    <name type="scientific">Arabidopsis thaliana</name>
    <name type="common">Mouse-ear cress</name>
    <dbReference type="NCBI Taxonomy" id="3702"/>
    <lineage>
        <taxon>Eukaryota</taxon>
        <taxon>Viridiplantae</taxon>
        <taxon>Streptophyta</taxon>
        <taxon>Embryophyta</taxon>
        <taxon>Tracheophyta</taxon>
        <taxon>Spermatophyta</taxon>
        <taxon>Magnoliopsida</taxon>
        <taxon>eudicotyledons</taxon>
        <taxon>Gunneridae</taxon>
        <taxon>Pentapetalae</taxon>
        <taxon>rosids</taxon>
        <taxon>malvids</taxon>
        <taxon>Brassicales</taxon>
        <taxon>Brassicaceae</taxon>
        <taxon>Camelineae</taxon>
        <taxon>Arabidopsis</taxon>
    </lineage>
</organism>
<name>SRS3_ARATH</name>
<evidence type="ECO:0000250" key="1"/>
<evidence type="ECO:0000269" key="2">
    <source>
    </source>
</evidence>
<evidence type="ECO:0000305" key="3"/>
<reference key="1">
    <citation type="journal article" date="1999" name="Nature">
        <title>Sequence and analysis of chromosome 2 of the plant Arabidopsis thaliana.</title>
        <authorList>
            <person name="Lin X."/>
            <person name="Kaul S."/>
            <person name="Rounsley S.D."/>
            <person name="Shea T.P."/>
            <person name="Benito M.-I."/>
            <person name="Town C.D."/>
            <person name="Fujii C.Y."/>
            <person name="Mason T.M."/>
            <person name="Bowman C.L."/>
            <person name="Barnstead M.E."/>
            <person name="Feldblyum T.V."/>
            <person name="Buell C.R."/>
            <person name="Ketchum K.A."/>
            <person name="Lee J.J."/>
            <person name="Ronning C.M."/>
            <person name="Koo H.L."/>
            <person name="Moffat K.S."/>
            <person name="Cronin L.A."/>
            <person name="Shen M."/>
            <person name="Pai G."/>
            <person name="Van Aken S."/>
            <person name="Umayam L."/>
            <person name="Tallon L.J."/>
            <person name="Gill J.E."/>
            <person name="Adams M.D."/>
            <person name="Carrera A.J."/>
            <person name="Creasy T.H."/>
            <person name="Goodman H.M."/>
            <person name="Somerville C.R."/>
            <person name="Copenhaver G.P."/>
            <person name="Preuss D."/>
            <person name="Nierman W.C."/>
            <person name="White O."/>
            <person name="Eisen J.A."/>
            <person name="Salzberg S.L."/>
            <person name="Fraser C.M."/>
            <person name="Venter J.C."/>
        </authorList>
    </citation>
    <scope>NUCLEOTIDE SEQUENCE [LARGE SCALE GENOMIC DNA]</scope>
    <source>
        <strain>cv. Columbia</strain>
    </source>
</reference>
<reference key="2">
    <citation type="journal article" date="2017" name="Plant J.">
        <title>Araport11: a complete reannotation of the Arabidopsis thaliana reference genome.</title>
        <authorList>
            <person name="Cheng C.Y."/>
            <person name="Krishnakumar V."/>
            <person name="Chan A.P."/>
            <person name="Thibaud-Nissen F."/>
            <person name="Schobel S."/>
            <person name="Town C.D."/>
        </authorList>
    </citation>
    <scope>GENOME REANNOTATION</scope>
    <source>
        <strain>cv. Columbia</strain>
    </source>
</reference>
<reference key="3">
    <citation type="journal article" date="2002" name="Plant Physiol.">
        <title>Cloning and sequencing of cDNAs for hypothetical genes from chromosome 2 of Arabidopsis.</title>
        <authorList>
            <person name="Xiao Y.-L."/>
            <person name="Malik M."/>
            <person name="Whitelaw C.A."/>
            <person name="Town C.D."/>
        </authorList>
    </citation>
    <scope>NUCLEOTIDE SEQUENCE [LARGE SCALE MRNA] OF 13-174</scope>
    <source>
        <strain>cv. Columbia</strain>
    </source>
</reference>
<reference key="4">
    <citation type="journal article" date="2006" name="Plant J.">
        <title>Functionally redundant SHI family genes regulate Arabidopsis gynoecium development in a dose-dependent manner.</title>
        <authorList>
            <person name="Kuusk S."/>
            <person name="Sohlberg J.J."/>
            <person name="Magnus Eklund D."/>
            <person name="Sundberg E."/>
        </authorList>
    </citation>
    <scope>FUNCTION</scope>
    <scope>DISRUPTION PHENOTYPE</scope>
    <scope>GENE FAMILY</scope>
    <scope>NOMENCLATURE</scope>
</reference>
<reference key="5">
    <citation type="journal article" date="2011" name="Plant Physiol.">
        <title>Expression of Arabidopsis SHORT INTERNODES/STYLISH family genes in auxin biosynthesis zones of aerial organs is dependent on a GCC box-like regulatory element.</title>
        <authorList>
            <person name="Eklund D.M."/>
            <person name="Cierlik I."/>
            <person name="Staaldal V."/>
            <person name="Claes A.R."/>
            <person name="Vestman D."/>
            <person name="Chandler J."/>
            <person name="Sundberg E."/>
        </authorList>
    </citation>
    <scope>GENE FAMILY</scope>
</reference>